<reference key="1">
    <citation type="submission" date="2009-07" db="EMBL/GenBank/DDBJ databases">
        <title>Complete sequence of Pectobacterium carotovorum subsp. carotovorum PC1.</title>
        <authorList>
            <consortium name="US DOE Joint Genome Institute"/>
            <person name="Lucas S."/>
            <person name="Copeland A."/>
            <person name="Lapidus A."/>
            <person name="Glavina del Rio T."/>
            <person name="Tice H."/>
            <person name="Bruce D."/>
            <person name="Goodwin L."/>
            <person name="Pitluck S."/>
            <person name="Munk A.C."/>
            <person name="Brettin T."/>
            <person name="Detter J.C."/>
            <person name="Han C."/>
            <person name="Tapia R."/>
            <person name="Larimer F."/>
            <person name="Land M."/>
            <person name="Hauser L."/>
            <person name="Kyrpides N."/>
            <person name="Mikhailova N."/>
            <person name="Balakrishnan V."/>
            <person name="Glasner J."/>
            <person name="Perna N.T."/>
        </authorList>
    </citation>
    <scope>NUCLEOTIDE SEQUENCE [LARGE SCALE GENOMIC DNA]</scope>
    <source>
        <strain>PC1</strain>
    </source>
</reference>
<feature type="chain" id="PRO_1000215816" description="Fe/S biogenesis protein NfuA">
    <location>
        <begin position="1"/>
        <end position="191"/>
    </location>
</feature>
<feature type="binding site" evidence="1">
    <location>
        <position position="149"/>
    </location>
    <ligand>
        <name>[4Fe-4S] cluster</name>
        <dbReference type="ChEBI" id="CHEBI:49883"/>
    </ligand>
</feature>
<feature type="binding site" evidence="1">
    <location>
        <position position="152"/>
    </location>
    <ligand>
        <name>[4Fe-4S] cluster</name>
        <dbReference type="ChEBI" id="CHEBI:49883"/>
    </ligand>
</feature>
<gene>
    <name evidence="1" type="primary">nfuA</name>
    <name type="ordered locus">PC1_3926</name>
</gene>
<sequence>MIRITDAAQEHFLKLLAKQEEGTQIRVFVINPGTPNAECGVSYCPPDAVEASDTVLKFEKISAYVDELSAPYLEDAEIDFVTDQLGSQLTLKAPNAKMRKVDDSAPLMERVEYVLQSQINPQLAGHGGRVTLMEITDDGMAILQFGGGCNGCSMVDYTLKEGIEKELLEKFPELKGVRDLTEHQRGEHSYY</sequence>
<organism>
    <name type="scientific">Pectobacterium carotovorum subsp. carotovorum (strain PC1)</name>
    <dbReference type="NCBI Taxonomy" id="561230"/>
    <lineage>
        <taxon>Bacteria</taxon>
        <taxon>Pseudomonadati</taxon>
        <taxon>Pseudomonadota</taxon>
        <taxon>Gammaproteobacteria</taxon>
        <taxon>Enterobacterales</taxon>
        <taxon>Pectobacteriaceae</taxon>
        <taxon>Pectobacterium</taxon>
    </lineage>
</organism>
<proteinExistence type="inferred from homology"/>
<protein>
    <recommendedName>
        <fullName evidence="1">Fe/S biogenesis protein NfuA</fullName>
    </recommendedName>
</protein>
<dbReference type="EMBL" id="CP001657">
    <property type="protein sequence ID" value="ACT14941.1"/>
    <property type="molecule type" value="Genomic_DNA"/>
</dbReference>
<dbReference type="RefSeq" id="WP_015842023.1">
    <property type="nucleotide sequence ID" value="NC_012917.1"/>
</dbReference>
<dbReference type="SMR" id="C6DH68"/>
<dbReference type="STRING" id="561230.PC1_3926"/>
<dbReference type="GeneID" id="67792165"/>
<dbReference type="KEGG" id="pct:PC1_3926"/>
<dbReference type="eggNOG" id="COG0316">
    <property type="taxonomic scope" value="Bacteria"/>
</dbReference>
<dbReference type="eggNOG" id="COG0694">
    <property type="taxonomic scope" value="Bacteria"/>
</dbReference>
<dbReference type="HOGENOM" id="CLU_094569_0_0_6"/>
<dbReference type="OrthoDB" id="9785450at2"/>
<dbReference type="Proteomes" id="UP000002736">
    <property type="component" value="Chromosome"/>
</dbReference>
<dbReference type="GO" id="GO:0051539">
    <property type="term" value="F:4 iron, 4 sulfur cluster binding"/>
    <property type="evidence" value="ECO:0007669"/>
    <property type="project" value="UniProtKB-UniRule"/>
</dbReference>
<dbReference type="GO" id="GO:0005506">
    <property type="term" value="F:iron ion binding"/>
    <property type="evidence" value="ECO:0007669"/>
    <property type="project" value="InterPro"/>
</dbReference>
<dbReference type="GO" id="GO:0016226">
    <property type="term" value="P:iron-sulfur cluster assembly"/>
    <property type="evidence" value="ECO:0007669"/>
    <property type="project" value="UniProtKB-UniRule"/>
</dbReference>
<dbReference type="GO" id="GO:0051604">
    <property type="term" value="P:protein maturation"/>
    <property type="evidence" value="ECO:0007669"/>
    <property type="project" value="UniProtKB-UniRule"/>
</dbReference>
<dbReference type="FunFam" id="3.30.300.130:FF:000002">
    <property type="entry name" value="Fe/S biogenesis protein NfuA"/>
    <property type="match status" value="1"/>
</dbReference>
<dbReference type="Gene3D" id="3.30.300.130">
    <property type="entry name" value="Fe-S cluster assembly (FSCA)"/>
    <property type="match status" value="1"/>
</dbReference>
<dbReference type="Gene3D" id="2.60.300.12">
    <property type="entry name" value="HesB-like domain"/>
    <property type="match status" value="1"/>
</dbReference>
<dbReference type="HAMAP" id="MF_01637">
    <property type="entry name" value="Fe_S_biogen_NfuA"/>
    <property type="match status" value="1"/>
</dbReference>
<dbReference type="InterPro" id="IPR017726">
    <property type="entry name" value="Fe/S_biogenesis_protein_NfuA"/>
</dbReference>
<dbReference type="InterPro" id="IPR000361">
    <property type="entry name" value="FeS_biogenesis"/>
</dbReference>
<dbReference type="InterPro" id="IPR034904">
    <property type="entry name" value="FSCA_dom_sf"/>
</dbReference>
<dbReference type="InterPro" id="IPR035903">
    <property type="entry name" value="HesB-like_dom_sf"/>
</dbReference>
<dbReference type="InterPro" id="IPR001075">
    <property type="entry name" value="NIF_FeS_clus_asmbl_NifU_C"/>
</dbReference>
<dbReference type="NCBIfam" id="NF008392">
    <property type="entry name" value="PRK11190.1"/>
    <property type="match status" value="1"/>
</dbReference>
<dbReference type="NCBIfam" id="TIGR03341">
    <property type="entry name" value="YhgI_GntY"/>
    <property type="match status" value="1"/>
</dbReference>
<dbReference type="PANTHER" id="PTHR11178:SF51">
    <property type="entry name" value="FE_S BIOGENESIS PROTEIN NFUA"/>
    <property type="match status" value="1"/>
</dbReference>
<dbReference type="PANTHER" id="PTHR11178">
    <property type="entry name" value="IRON-SULFUR CLUSTER SCAFFOLD PROTEIN NFU-RELATED"/>
    <property type="match status" value="1"/>
</dbReference>
<dbReference type="Pfam" id="PF01521">
    <property type="entry name" value="Fe-S_biosyn"/>
    <property type="match status" value="1"/>
</dbReference>
<dbReference type="Pfam" id="PF01106">
    <property type="entry name" value="NifU"/>
    <property type="match status" value="1"/>
</dbReference>
<dbReference type="SUPFAM" id="SSF117916">
    <property type="entry name" value="Fe-S cluster assembly (FSCA) domain-like"/>
    <property type="match status" value="1"/>
</dbReference>
<dbReference type="SUPFAM" id="SSF89360">
    <property type="entry name" value="HesB-like domain"/>
    <property type="match status" value="1"/>
</dbReference>
<accession>C6DH68</accession>
<evidence type="ECO:0000255" key="1">
    <source>
        <dbReference type="HAMAP-Rule" id="MF_01637"/>
    </source>
</evidence>
<keyword id="KW-0004">4Fe-4S</keyword>
<keyword id="KW-0408">Iron</keyword>
<keyword id="KW-0411">Iron-sulfur</keyword>
<keyword id="KW-0479">Metal-binding</keyword>
<name>NFUA_PECCP</name>
<comment type="function">
    <text evidence="1">Involved in iron-sulfur cluster biogenesis. Binds a 4Fe-4S cluster, can transfer this cluster to apoproteins, and thereby intervenes in the maturation of Fe/S proteins. Could also act as a scaffold/chaperone for damaged Fe/S proteins.</text>
</comment>
<comment type="cofactor">
    <cofactor evidence="1">
        <name>[4Fe-4S] cluster</name>
        <dbReference type="ChEBI" id="CHEBI:49883"/>
    </cofactor>
    <text evidence="1">Binds 1 [4Fe-4S] cluster per subunit. The cluster is presumably bound at the interface of two monomers.</text>
</comment>
<comment type="subunit">
    <text evidence="1">Homodimer.</text>
</comment>
<comment type="similarity">
    <text evidence="1">Belongs to the NfuA family.</text>
</comment>